<protein>
    <recommendedName>
        <fullName evidence="1">Cyanate hydratase</fullName>
        <shortName evidence="1">Cyanase</shortName>
        <ecNumber evidence="1">4.2.1.104</ecNumber>
    </recommendedName>
    <alternativeName>
        <fullName evidence="1">Cyanate hydrolase</fullName>
    </alternativeName>
    <alternativeName>
        <fullName evidence="1">Cyanate lyase</fullName>
    </alternativeName>
</protein>
<feature type="chain" id="PRO_1000081863" description="Cyanate hydratase">
    <location>
        <begin position="1"/>
        <end position="146"/>
    </location>
</feature>
<feature type="active site" evidence="1">
    <location>
        <position position="87"/>
    </location>
</feature>
<feature type="active site" evidence="1">
    <location>
        <position position="90"/>
    </location>
</feature>
<feature type="active site" evidence="1">
    <location>
        <position position="113"/>
    </location>
</feature>
<reference key="1">
    <citation type="submission" date="2007-06" db="EMBL/GenBank/DDBJ databases">
        <title>Complete sequence of Marinomonas sp. MWYL1.</title>
        <authorList>
            <consortium name="US DOE Joint Genome Institute"/>
            <person name="Copeland A."/>
            <person name="Lucas S."/>
            <person name="Lapidus A."/>
            <person name="Barry K."/>
            <person name="Glavina del Rio T."/>
            <person name="Dalin E."/>
            <person name="Tice H."/>
            <person name="Pitluck S."/>
            <person name="Kiss H."/>
            <person name="Brettin T."/>
            <person name="Bruce D."/>
            <person name="Detter J.C."/>
            <person name="Han C."/>
            <person name="Schmutz J."/>
            <person name="Larimer F."/>
            <person name="Land M."/>
            <person name="Hauser L."/>
            <person name="Kyrpides N."/>
            <person name="Kim E."/>
            <person name="Johnston A.W.B."/>
            <person name="Todd J.D."/>
            <person name="Rogers R."/>
            <person name="Wexler M."/>
            <person name="Bond P.L."/>
            <person name="Li Y."/>
            <person name="Richardson P."/>
        </authorList>
    </citation>
    <scope>NUCLEOTIDE SEQUENCE [LARGE SCALE GENOMIC DNA]</scope>
    <source>
        <strain>MWYL1</strain>
    </source>
</reference>
<accession>A6W1Q1</accession>
<dbReference type="EC" id="4.2.1.104" evidence="1"/>
<dbReference type="EMBL" id="CP000749">
    <property type="protein sequence ID" value="ABR72630.1"/>
    <property type="molecule type" value="Genomic_DNA"/>
</dbReference>
<dbReference type="SMR" id="A6W1Q1"/>
<dbReference type="STRING" id="400668.Mmwyl1_3729"/>
<dbReference type="KEGG" id="mmw:Mmwyl1_3729"/>
<dbReference type="eggNOG" id="COG1513">
    <property type="taxonomic scope" value="Bacteria"/>
</dbReference>
<dbReference type="HOGENOM" id="CLU_103452_1_0_6"/>
<dbReference type="OrthoDB" id="9785870at2"/>
<dbReference type="GO" id="GO:0008824">
    <property type="term" value="F:cyanate hydratase activity"/>
    <property type="evidence" value="ECO:0007669"/>
    <property type="project" value="UniProtKB-UniRule"/>
</dbReference>
<dbReference type="GO" id="GO:0003677">
    <property type="term" value="F:DNA binding"/>
    <property type="evidence" value="ECO:0007669"/>
    <property type="project" value="InterPro"/>
</dbReference>
<dbReference type="GO" id="GO:0009439">
    <property type="term" value="P:cyanate metabolic process"/>
    <property type="evidence" value="ECO:0007669"/>
    <property type="project" value="UniProtKB-UniRule"/>
</dbReference>
<dbReference type="CDD" id="cd00559">
    <property type="entry name" value="Cyanase_C"/>
    <property type="match status" value="1"/>
</dbReference>
<dbReference type="Gene3D" id="3.30.1160.10">
    <property type="entry name" value="Cyanate lyase, C-terminal domain"/>
    <property type="match status" value="1"/>
</dbReference>
<dbReference type="Gene3D" id="1.10.260.40">
    <property type="entry name" value="lambda repressor-like DNA-binding domains"/>
    <property type="match status" value="1"/>
</dbReference>
<dbReference type="HAMAP" id="MF_00535">
    <property type="entry name" value="Cyanate_hydrat"/>
    <property type="match status" value="1"/>
</dbReference>
<dbReference type="InterPro" id="IPR008076">
    <property type="entry name" value="Cyanase"/>
</dbReference>
<dbReference type="InterPro" id="IPR003712">
    <property type="entry name" value="Cyanate_lyase_C"/>
</dbReference>
<dbReference type="InterPro" id="IPR036581">
    <property type="entry name" value="Cyanate_lyase_C_sf"/>
</dbReference>
<dbReference type="InterPro" id="IPR048564">
    <property type="entry name" value="CYNS_N"/>
</dbReference>
<dbReference type="InterPro" id="IPR010982">
    <property type="entry name" value="Lambda_DNA-bd_dom_sf"/>
</dbReference>
<dbReference type="NCBIfam" id="TIGR00673">
    <property type="entry name" value="cynS"/>
    <property type="match status" value="1"/>
</dbReference>
<dbReference type="NCBIfam" id="NF002773">
    <property type="entry name" value="PRK02866.1"/>
    <property type="match status" value="1"/>
</dbReference>
<dbReference type="PANTHER" id="PTHR34186">
    <property type="entry name" value="CYANATE HYDRATASE"/>
    <property type="match status" value="1"/>
</dbReference>
<dbReference type="PANTHER" id="PTHR34186:SF2">
    <property type="entry name" value="CYANATE HYDRATASE"/>
    <property type="match status" value="1"/>
</dbReference>
<dbReference type="Pfam" id="PF02560">
    <property type="entry name" value="Cyanate_lyase"/>
    <property type="match status" value="1"/>
</dbReference>
<dbReference type="Pfam" id="PF21291">
    <property type="entry name" value="CYNS_N"/>
    <property type="match status" value="1"/>
</dbReference>
<dbReference type="PIRSF" id="PIRSF001263">
    <property type="entry name" value="Cyanate_hydratas"/>
    <property type="match status" value="1"/>
</dbReference>
<dbReference type="PRINTS" id="PR01693">
    <property type="entry name" value="CYANASE"/>
</dbReference>
<dbReference type="SMART" id="SM01116">
    <property type="entry name" value="Cyanate_lyase"/>
    <property type="match status" value="1"/>
</dbReference>
<dbReference type="SUPFAM" id="SSF55234">
    <property type="entry name" value="Cyanase C-terminal domain"/>
    <property type="match status" value="1"/>
</dbReference>
<dbReference type="SUPFAM" id="SSF47413">
    <property type="entry name" value="lambda repressor-like DNA-binding domains"/>
    <property type="match status" value="1"/>
</dbReference>
<evidence type="ECO:0000255" key="1">
    <source>
        <dbReference type="HAMAP-Rule" id="MF_00535"/>
    </source>
</evidence>
<proteinExistence type="inferred from homology"/>
<sequence>MKKIDVTEAIFAIKKEKNLTWEAIADAVGMTDVWITSACLGMNSCTEEVAEKLVAFLGLPAEAKSVLMEYPTKTWDEAIPQDPLIYRLYEVVGVYGPTLKEVIQEKFGDGIMSAIDFSMKVDKEENPKGDRVILTMNGKFLPYKSW</sequence>
<comment type="function">
    <text evidence="1">Catalyzes the reaction of cyanate with bicarbonate to produce ammonia and carbon dioxide.</text>
</comment>
<comment type="catalytic activity">
    <reaction evidence="1">
        <text>cyanate + hydrogencarbonate + 3 H(+) = NH4(+) + 2 CO2</text>
        <dbReference type="Rhea" id="RHEA:11120"/>
        <dbReference type="ChEBI" id="CHEBI:15378"/>
        <dbReference type="ChEBI" id="CHEBI:16526"/>
        <dbReference type="ChEBI" id="CHEBI:17544"/>
        <dbReference type="ChEBI" id="CHEBI:28938"/>
        <dbReference type="ChEBI" id="CHEBI:29195"/>
        <dbReference type="EC" id="4.2.1.104"/>
    </reaction>
</comment>
<comment type="similarity">
    <text evidence="1">Belongs to the cyanase family.</text>
</comment>
<name>CYNS_MARMS</name>
<gene>
    <name evidence="1" type="primary">cynS</name>
    <name type="ordered locus">Mmwyl1_3729</name>
</gene>
<keyword id="KW-0456">Lyase</keyword>
<organism>
    <name type="scientific">Marinomonas sp. (strain MWYL1)</name>
    <dbReference type="NCBI Taxonomy" id="400668"/>
    <lineage>
        <taxon>Bacteria</taxon>
        <taxon>Pseudomonadati</taxon>
        <taxon>Pseudomonadota</taxon>
        <taxon>Gammaproteobacteria</taxon>
        <taxon>Oceanospirillales</taxon>
        <taxon>Oceanospirillaceae</taxon>
        <taxon>Marinomonas</taxon>
    </lineage>
</organism>